<comment type="function">
    <text evidence="1">NDH-1 shuttles electrons from NADH, via FMN and iron-sulfur (Fe-S) centers, to quinones in the respiratory chain. The immediate electron acceptor for the enzyme in this species is believed to be ubiquinone. Couples the redox reaction to proton translocation (for every two electrons transferred, four hydrogen ions are translocated across the cytoplasmic membrane), and thus conserves the redox energy in a proton gradient.</text>
</comment>
<comment type="catalytic activity">
    <reaction evidence="1">
        <text>a quinone + NADH + 5 H(+)(in) = a quinol + NAD(+) + 4 H(+)(out)</text>
        <dbReference type="Rhea" id="RHEA:57888"/>
        <dbReference type="ChEBI" id="CHEBI:15378"/>
        <dbReference type="ChEBI" id="CHEBI:24646"/>
        <dbReference type="ChEBI" id="CHEBI:57540"/>
        <dbReference type="ChEBI" id="CHEBI:57945"/>
        <dbReference type="ChEBI" id="CHEBI:132124"/>
    </reaction>
</comment>
<comment type="cofactor">
    <cofactor evidence="1">
        <name>[4Fe-4S] cluster</name>
        <dbReference type="ChEBI" id="CHEBI:49883"/>
    </cofactor>
    <text evidence="1">Binds 1 [4Fe-4S] cluster.</text>
</comment>
<comment type="subunit">
    <text evidence="1">NDH-1 is composed of 13 different subunits. Subunits NuoB, CD, E, F, and G constitute the peripheral sector of the complex.</text>
</comment>
<comment type="subcellular location">
    <subcellularLocation>
        <location evidence="1">Cell inner membrane</location>
        <topology evidence="1">Peripheral membrane protein</topology>
        <orientation evidence="1">Cytoplasmic side</orientation>
    </subcellularLocation>
</comment>
<comment type="similarity">
    <text evidence="1">Belongs to the complex I 20 kDa subunit family.</text>
</comment>
<sequence length="220" mass="25089">MDYTLTRIDPNGENDRYPLQKQEIVTDPLEQEVNKNVFMGKLHDMVNWGRKNSIWPYNFGLSCCYVEMVTSFTAVHDVARFGAEVLRASPRQADLMVVAGTCFTKMAPVIQRLYDQMLEPKWVISMGACANSGGMYDIYSVVQGVDKFIPVDVYIPGCPPRPEAYMQALMLLQESIGKERRPLSWVVGDQGVYRANMQPERERKRGERIAVTNLRTPDEI</sequence>
<organism>
    <name type="scientific">Salmonella enteritidis PT4 (strain P125109)</name>
    <dbReference type="NCBI Taxonomy" id="550537"/>
    <lineage>
        <taxon>Bacteria</taxon>
        <taxon>Pseudomonadati</taxon>
        <taxon>Pseudomonadota</taxon>
        <taxon>Gammaproteobacteria</taxon>
        <taxon>Enterobacterales</taxon>
        <taxon>Enterobacteriaceae</taxon>
        <taxon>Salmonella</taxon>
    </lineage>
</organism>
<feature type="chain" id="PRO_0000376363" description="NADH-quinone oxidoreductase subunit B">
    <location>
        <begin position="1"/>
        <end position="220"/>
    </location>
</feature>
<feature type="binding site" evidence="1">
    <location>
        <position position="63"/>
    </location>
    <ligand>
        <name>[4Fe-4S] cluster</name>
        <dbReference type="ChEBI" id="CHEBI:49883"/>
    </ligand>
</feature>
<feature type="binding site" evidence="1">
    <location>
        <position position="64"/>
    </location>
    <ligand>
        <name>[4Fe-4S] cluster</name>
        <dbReference type="ChEBI" id="CHEBI:49883"/>
    </ligand>
</feature>
<feature type="binding site" evidence="1">
    <location>
        <position position="129"/>
    </location>
    <ligand>
        <name>[4Fe-4S] cluster</name>
        <dbReference type="ChEBI" id="CHEBI:49883"/>
    </ligand>
</feature>
<feature type="binding site" evidence="1">
    <location>
        <position position="158"/>
    </location>
    <ligand>
        <name>[4Fe-4S] cluster</name>
        <dbReference type="ChEBI" id="CHEBI:49883"/>
    </ligand>
</feature>
<protein>
    <recommendedName>
        <fullName evidence="1">NADH-quinone oxidoreductase subunit B</fullName>
        <ecNumber evidence="1">7.1.1.-</ecNumber>
    </recommendedName>
    <alternativeName>
        <fullName evidence="1">NADH dehydrogenase I subunit B</fullName>
    </alternativeName>
    <alternativeName>
        <fullName evidence="1">NDH-1 subunit B</fullName>
    </alternativeName>
</protein>
<keyword id="KW-0004">4Fe-4S</keyword>
<keyword id="KW-0997">Cell inner membrane</keyword>
<keyword id="KW-1003">Cell membrane</keyword>
<keyword id="KW-0408">Iron</keyword>
<keyword id="KW-0411">Iron-sulfur</keyword>
<keyword id="KW-0472">Membrane</keyword>
<keyword id="KW-0479">Metal-binding</keyword>
<keyword id="KW-0520">NAD</keyword>
<keyword id="KW-0874">Quinone</keyword>
<keyword id="KW-1278">Translocase</keyword>
<keyword id="KW-0813">Transport</keyword>
<keyword id="KW-0830">Ubiquinone</keyword>
<accession>B5R308</accession>
<proteinExistence type="inferred from homology"/>
<reference key="1">
    <citation type="journal article" date="2008" name="Genome Res.">
        <title>Comparative genome analysis of Salmonella enteritidis PT4 and Salmonella gallinarum 287/91 provides insights into evolutionary and host adaptation pathways.</title>
        <authorList>
            <person name="Thomson N.R."/>
            <person name="Clayton D.J."/>
            <person name="Windhorst D."/>
            <person name="Vernikos G."/>
            <person name="Davidson S."/>
            <person name="Churcher C."/>
            <person name="Quail M.A."/>
            <person name="Stevens M."/>
            <person name="Jones M.A."/>
            <person name="Watson M."/>
            <person name="Barron A."/>
            <person name="Layton A."/>
            <person name="Pickard D."/>
            <person name="Kingsley R.A."/>
            <person name="Bignell A."/>
            <person name="Clark L."/>
            <person name="Harris B."/>
            <person name="Ormond D."/>
            <person name="Abdellah Z."/>
            <person name="Brooks K."/>
            <person name="Cherevach I."/>
            <person name="Chillingworth T."/>
            <person name="Woodward J."/>
            <person name="Norberczak H."/>
            <person name="Lord A."/>
            <person name="Arrowsmith C."/>
            <person name="Jagels K."/>
            <person name="Moule S."/>
            <person name="Mungall K."/>
            <person name="Saunders M."/>
            <person name="Whitehead S."/>
            <person name="Chabalgoity J.A."/>
            <person name="Maskell D."/>
            <person name="Humphreys T."/>
            <person name="Roberts M."/>
            <person name="Barrow P.A."/>
            <person name="Dougan G."/>
            <person name="Parkhill J."/>
        </authorList>
    </citation>
    <scope>NUCLEOTIDE SEQUENCE [LARGE SCALE GENOMIC DNA]</scope>
    <source>
        <strain>P125109</strain>
    </source>
</reference>
<name>NUOB_SALEP</name>
<dbReference type="EC" id="7.1.1.-" evidence="1"/>
<dbReference type="EMBL" id="AM933172">
    <property type="protein sequence ID" value="CAR33893.1"/>
    <property type="molecule type" value="Genomic_DNA"/>
</dbReference>
<dbReference type="RefSeq" id="WP_000386728.1">
    <property type="nucleotide sequence ID" value="NC_011294.1"/>
</dbReference>
<dbReference type="SMR" id="B5R308"/>
<dbReference type="KEGG" id="set:SEN2309"/>
<dbReference type="HOGENOM" id="CLU_055737_7_3_6"/>
<dbReference type="Proteomes" id="UP000000613">
    <property type="component" value="Chromosome"/>
</dbReference>
<dbReference type="GO" id="GO:0005886">
    <property type="term" value="C:plasma membrane"/>
    <property type="evidence" value="ECO:0007669"/>
    <property type="project" value="UniProtKB-SubCell"/>
</dbReference>
<dbReference type="GO" id="GO:0045271">
    <property type="term" value="C:respiratory chain complex I"/>
    <property type="evidence" value="ECO:0007669"/>
    <property type="project" value="TreeGrafter"/>
</dbReference>
<dbReference type="GO" id="GO:0051539">
    <property type="term" value="F:4 iron, 4 sulfur cluster binding"/>
    <property type="evidence" value="ECO:0007669"/>
    <property type="project" value="UniProtKB-KW"/>
</dbReference>
<dbReference type="GO" id="GO:0005506">
    <property type="term" value="F:iron ion binding"/>
    <property type="evidence" value="ECO:0007669"/>
    <property type="project" value="UniProtKB-UniRule"/>
</dbReference>
<dbReference type="GO" id="GO:0008137">
    <property type="term" value="F:NADH dehydrogenase (ubiquinone) activity"/>
    <property type="evidence" value="ECO:0007669"/>
    <property type="project" value="InterPro"/>
</dbReference>
<dbReference type="GO" id="GO:0050136">
    <property type="term" value="F:NADH:ubiquinone reductase (non-electrogenic) activity"/>
    <property type="evidence" value="ECO:0007669"/>
    <property type="project" value="UniProtKB-UniRule"/>
</dbReference>
<dbReference type="GO" id="GO:0048038">
    <property type="term" value="F:quinone binding"/>
    <property type="evidence" value="ECO:0007669"/>
    <property type="project" value="UniProtKB-KW"/>
</dbReference>
<dbReference type="GO" id="GO:0009060">
    <property type="term" value="P:aerobic respiration"/>
    <property type="evidence" value="ECO:0007669"/>
    <property type="project" value="TreeGrafter"/>
</dbReference>
<dbReference type="GO" id="GO:0015990">
    <property type="term" value="P:electron transport coupled proton transport"/>
    <property type="evidence" value="ECO:0007669"/>
    <property type="project" value="TreeGrafter"/>
</dbReference>
<dbReference type="FunFam" id="3.40.50.12280:FF:000002">
    <property type="entry name" value="NADH-quinone oxidoreductase subunit B"/>
    <property type="match status" value="1"/>
</dbReference>
<dbReference type="Gene3D" id="3.40.50.12280">
    <property type="match status" value="1"/>
</dbReference>
<dbReference type="HAMAP" id="MF_01356">
    <property type="entry name" value="NDH1_NuoB"/>
    <property type="match status" value="1"/>
</dbReference>
<dbReference type="InterPro" id="IPR006137">
    <property type="entry name" value="NADH_UbQ_OxRdtase-like_20kDa"/>
</dbReference>
<dbReference type="InterPro" id="IPR006138">
    <property type="entry name" value="NADH_UQ_OxRdtase_20Kd_su"/>
</dbReference>
<dbReference type="NCBIfam" id="TIGR01957">
    <property type="entry name" value="nuoB_fam"/>
    <property type="match status" value="1"/>
</dbReference>
<dbReference type="NCBIfam" id="NF005012">
    <property type="entry name" value="PRK06411.1"/>
    <property type="match status" value="1"/>
</dbReference>
<dbReference type="PANTHER" id="PTHR11995">
    <property type="entry name" value="NADH DEHYDROGENASE"/>
    <property type="match status" value="1"/>
</dbReference>
<dbReference type="PANTHER" id="PTHR11995:SF14">
    <property type="entry name" value="NADH DEHYDROGENASE [UBIQUINONE] IRON-SULFUR PROTEIN 7, MITOCHONDRIAL"/>
    <property type="match status" value="1"/>
</dbReference>
<dbReference type="Pfam" id="PF01058">
    <property type="entry name" value="Oxidored_q6"/>
    <property type="match status" value="1"/>
</dbReference>
<dbReference type="SUPFAM" id="SSF56770">
    <property type="entry name" value="HydA/Nqo6-like"/>
    <property type="match status" value="1"/>
</dbReference>
<dbReference type="PROSITE" id="PS01150">
    <property type="entry name" value="COMPLEX1_20K"/>
    <property type="match status" value="1"/>
</dbReference>
<gene>
    <name evidence="1" type="primary">nuoB</name>
    <name type="ordered locus">SEN2309</name>
</gene>
<evidence type="ECO:0000255" key="1">
    <source>
        <dbReference type="HAMAP-Rule" id="MF_01356"/>
    </source>
</evidence>